<comment type="function">
    <text evidence="1">Single strand-specific metallo-endoribonuclease involved in late-stage 70S ribosome quality control and in maturation of the 3' terminus of the 16S rRNA.</text>
</comment>
<comment type="cofactor">
    <cofactor evidence="1">
        <name>Zn(2+)</name>
        <dbReference type="ChEBI" id="CHEBI:29105"/>
    </cofactor>
    <text evidence="1">Binds 1 zinc ion.</text>
</comment>
<comment type="subcellular location">
    <subcellularLocation>
        <location evidence="1">Cytoplasm</location>
    </subcellularLocation>
</comment>
<comment type="similarity">
    <text evidence="1">Belongs to the endoribonuclease YbeY family.</text>
</comment>
<name>YBEY_BACMK</name>
<proteinExistence type="inferred from homology"/>
<protein>
    <recommendedName>
        <fullName evidence="1">Endoribonuclease YbeY</fullName>
        <ecNumber evidence="1">3.1.-.-</ecNumber>
    </recommendedName>
</protein>
<keyword id="KW-0963">Cytoplasm</keyword>
<keyword id="KW-0255">Endonuclease</keyword>
<keyword id="KW-0378">Hydrolase</keyword>
<keyword id="KW-0479">Metal-binding</keyword>
<keyword id="KW-0540">Nuclease</keyword>
<keyword id="KW-0690">Ribosome biogenesis</keyword>
<keyword id="KW-0698">rRNA processing</keyword>
<keyword id="KW-0862">Zinc</keyword>
<evidence type="ECO:0000255" key="1">
    <source>
        <dbReference type="HAMAP-Rule" id="MF_00009"/>
    </source>
</evidence>
<sequence>MSLLIDFIDETEEVKDEYISLIRGLVEKAAQMENIEEGAELSVTFVDNERIREINRDYRDKDQPTDVISFAMEEMGEGEMEIVGAEMPRMLGDLIISIPRAKEQAEEYGHSFDRELGFLALHGFLHLLGYDHMTEEDEKEMFGRQKEILEAFGLGR</sequence>
<organism>
    <name type="scientific">Bacillus mycoides (strain KBAB4)</name>
    <name type="common">Bacillus weihenstephanensis</name>
    <dbReference type="NCBI Taxonomy" id="315730"/>
    <lineage>
        <taxon>Bacteria</taxon>
        <taxon>Bacillati</taxon>
        <taxon>Bacillota</taxon>
        <taxon>Bacilli</taxon>
        <taxon>Bacillales</taxon>
        <taxon>Bacillaceae</taxon>
        <taxon>Bacillus</taxon>
        <taxon>Bacillus cereus group</taxon>
    </lineage>
</organism>
<gene>
    <name evidence="1" type="primary">ybeY</name>
    <name type="ordered locus">BcerKBAB4_4154</name>
</gene>
<feature type="chain" id="PRO_1000089150" description="Endoribonuclease YbeY">
    <location>
        <begin position="1"/>
        <end position="156"/>
    </location>
</feature>
<feature type="binding site" evidence="1">
    <location>
        <position position="122"/>
    </location>
    <ligand>
        <name>Zn(2+)</name>
        <dbReference type="ChEBI" id="CHEBI:29105"/>
        <note>catalytic</note>
    </ligand>
</feature>
<feature type="binding site" evidence="1">
    <location>
        <position position="126"/>
    </location>
    <ligand>
        <name>Zn(2+)</name>
        <dbReference type="ChEBI" id="CHEBI:29105"/>
        <note>catalytic</note>
    </ligand>
</feature>
<feature type="binding site" evidence="1">
    <location>
        <position position="132"/>
    </location>
    <ligand>
        <name>Zn(2+)</name>
        <dbReference type="ChEBI" id="CHEBI:29105"/>
        <note>catalytic</note>
    </ligand>
</feature>
<dbReference type="EC" id="3.1.-.-" evidence="1"/>
<dbReference type="EMBL" id="CP000903">
    <property type="protein sequence ID" value="ABY45315.1"/>
    <property type="molecule type" value="Genomic_DNA"/>
</dbReference>
<dbReference type="RefSeq" id="WP_002088675.1">
    <property type="nucleotide sequence ID" value="NZ_CAKMRX030000066.1"/>
</dbReference>
<dbReference type="SMR" id="A9VHT0"/>
<dbReference type="GeneID" id="66266122"/>
<dbReference type="KEGG" id="bwe:BcerKBAB4_4154"/>
<dbReference type="eggNOG" id="COG0319">
    <property type="taxonomic scope" value="Bacteria"/>
</dbReference>
<dbReference type="HOGENOM" id="CLU_106710_3_0_9"/>
<dbReference type="Proteomes" id="UP000002154">
    <property type="component" value="Chromosome"/>
</dbReference>
<dbReference type="GO" id="GO:0005737">
    <property type="term" value="C:cytoplasm"/>
    <property type="evidence" value="ECO:0007669"/>
    <property type="project" value="UniProtKB-SubCell"/>
</dbReference>
<dbReference type="GO" id="GO:0004222">
    <property type="term" value="F:metalloendopeptidase activity"/>
    <property type="evidence" value="ECO:0007669"/>
    <property type="project" value="InterPro"/>
</dbReference>
<dbReference type="GO" id="GO:0004521">
    <property type="term" value="F:RNA endonuclease activity"/>
    <property type="evidence" value="ECO:0007669"/>
    <property type="project" value="UniProtKB-UniRule"/>
</dbReference>
<dbReference type="GO" id="GO:0008270">
    <property type="term" value="F:zinc ion binding"/>
    <property type="evidence" value="ECO:0007669"/>
    <property type="project" value="UniProtKB-UniRule"/>
</dbReference>
<dbReference type="GO" id="GO:0006364">
    <property type="term" value="P:rRNA processing"/>
    <property type="evidence" value="ECO:0007669"/>
    <property type="project" value="UniProtKB-UniRule"/>
</dbReference>
<dbReference type="Gene3D" id="3.40.390.30">
    <property type="entry name" value="Metalloproteases ('zincins'), catalytic domain"/>
    <property type="match status" value="1"/>
</dbReference>
<dbReference type="HAMAP" id="MF_00009">
    <property type="entry name" value="Endoribonucl_YbeY"/>
    <property type="match status" value="1"/>
</dbReference>
<dbReference type="InterPro" id="IPR023091">
    <property type="entry name" value="MetalPrtase_cat_dom_sf_prd"/>
</dbReference>
<dbReference type="InterPro" id="IPR002036">
    <property type="entry name" value="YbeY"/>
</dbReference>
<dbReference type="InterPro" id="IPR020549">
    <property type="entry name" value="YbeY_CS"/>
</dbReference>
<dbReference type="NCBIfam" id="TIGR00043">
    <property type="entry name" value="rRNA maturation RNase YbeY"/>
    <property type="match status" value="1"/>
</dbReference>
<dbReference type="PANTHER" id="PTHR46986">
    <property type="entry name" value="ENDORIBONUCLEASE YBEY, CHLOROPLASTIC"/>
    <property type="match status" value="1"/>
</dbReference>
<dbReference type="PANTHER" id="PTHR46986:SF1">
    <property type="entry name" value="ENDORIBONUCLEASE YBEY, CHLOROPLASTIC"/>
    <property type="match status" value="1"/>
</dbReference>
<dbReference type="Pfam" id="PF02130">
    <property type="entry name" value="YbeY"/>
    <property type="match status" value="1"/>
</dbReference>
<dbReference type="SUPFAM" id="SSF55486">
    <property type="entry name" value="Metalloproteases ('zincins'), catalytic domain"/>
    <property type="match status" value="1"/>
</dbReference>
<dbReference type="PROSITE" id="PS01306">
    <property type="entry name" value="UPF0054"/>
    <property type="match status" value="1"/>
</dbReference>
<reference key="1">
    <citation type="journal article" date="2008" name="Chem. Biol. Interact.">
        <title>Extending the Bacillus cereus group genomics to putative food-borne pathogens of different toxicity.</title>
        <authorList>
            <person name="Lapidus A."/>
            <person name="Goltsman E."/>
            <person name="Auger S."/>
            <person name="Galleron N."/>
            <person name="Segurens B."/>
            <person name="Dossat C."/>
            <person name="Land M.L."/>
            <person name="Broussolle V."/>
            <person name="Brillard J."/>
            <person name="Guinebretiere M.-H."/>
            <person name="Sanchis V."/>
            <person name="Nguen-the C."/>
            <person name="Lereclus D."/>
            <person name="Richardson P."/>
            <person name="Wincker P."/>
            <person name="Weissenbach J."/>
            <person name="Ehrlich S.D."/>
            <person name="Sorokin A."/>
        </authorList>
    </citation>
    <scope>NUCLEOTIDE SEQUENCE [LARGE SCALE GENOMIC DNA]</scope>
    <source>
        <strain>KBAB4</strain>
    </source>
</reference>
<accession>A9VHT0</accession>